<protein>
    <recommendedName>
        <fullName evidence="10">Acidic endochitinase Pun g 14, amyloplastic</fullName>
        <ecNumber evidence="2 3 14">3.2.1.14</ecNumber>
    </recommendedName>
    <alternativeName>
        <fullName evidence="7 8 9">Chitinase III</fullName>
    </alternativeName>
    <alternativeName>
        <fullName evidence="7">Pomegranate seed chitinase</fullName>
    </alternativeName>
    <allergenName evidence="9">Pun g 14</allergenName>
</protein>
<keyword id="KW-0002">3D-structure</keyword>
<keyword id="KW-0020">Allergen</keyword>
<keyword id="KW-0035">Amyloplast</keyword>
<keyword id="KW-0106">Calcium</keyword>
<keyword id="KW-0119">Carbohydrate metabolism</keyword>
<keyword id="KW-0146">Chitin degradation</keyword>
<keyword id="KW-0903">Direct protein sequencing</keyword>
<keyword id="KW-1015">Disulfide bond</keyword>
<keyword id="KW-0326">Glycosidase</keyword>
<keyword id="KW-0378">Hydrolase</keyword>
<keyword id="KW-0479">Metal-binding</keyword>
<keyword id="KW-0934">Plastid</keyword>
<keyword id="KW-0624">Polysaccharide degradation</keyword>
<keyword id="KW-0809">Transit peptide</keyword>
<sequence>MAKTLPFSRALLLSLSILLVARAISAGDIAIYWGQNGGEGTLASTCDTGRYAYVIVSFVTTFGNFRAPVVNLAGHCDPAAGTCTGLSDEIRSCQGKDIKVLMSIGGGAGDYSLVSEADADNFADYLWNNFLGGQSSSRPLGDAVLDGIDFDIELGTTTFYDTLARALSSRSTQAAKVYLTAAPQCPHPDSHLDAALNTGLFDNVWIQFYNNPLAQCQYSSGNTNDILSSWNTWTSSTTAGKIFLGLPAAPEAAGSGYIPPDVLTGQILPQIKTSAKYGGVMLYSKFYDTTYSTTIKDQV</sequence>
<name>CHIT_PUNGR</name>
<feature type="transit peptide" description="Amyloplast" evidence="3 6">
    <location>
        <begin position="1"/>
        <end position="26"/>
    </location>
</feature>
<feature type="chain" id="PRO_5011206581" description="Acidic endochitinase Pun g 14, amyloplastic" evidence="11 13">
    <location>
        <begin position="27"/>
        <end position="299"/>
    </location>
</feature>
<feature type="domain" description="GH18" evidence="1">
    <location>
        <begin position="27"/>
        <end position="299"/>
    </location>
</feature>
<feature type="active site" description="Proton donor" evidence="1 12">
    <location>
        <position position="153"/>
    </location>
</feature>
<feature type="disulfide bond" evidence="5 16">
    <location>
        <begin position="46"/>
        <end position="93"/>
    </location>
</feature>
<feature type="disulfide bond" evidence="5 16">
    <location>
        <begin position="76"/>
        <end position="83"/>
    </location>
</feature>
<feature type="disulfide bond" evidence="5 16">
    <location>
        <begin position="185"/>
        <end position="216"/>
    </location>
</feature>
<feature type="sequence conflict" description="In Ref. 1; AA sequence." evidence="10" ref="1">
    <original>I</original>
    <variation>L</variation>
    <location>
        <position position="90"/>
    </location>
</feature>
<feature type="sequence conflict" description="In Ref. 1; AA sequence." evidence="10" ref="1">
    <original>I</original>
    <variation>L</variation>
    <location>
        <position position="295"/>
    </location>
</feature>
<feature type="strand" evidence="17">
    <location>
        <begin position="28"/>
        <end position="35"/>
    </location>
</feature>
<feature type="helix" evidence="17">
    <location>
        <begin position="37"/>
        <end position="39"/>
    </location>
</feature>
<feature type="helix" evidence="17">
    <location>
        <begin position="42"/>
        <end position="47"/>
    </location>
</feature>
<feature type="strand" evidence="17">
    <location>
        <begin position="52"/>
        <end position="63"/>
    </location>
</feature>
<feature type="strand" evidence="17">
    <location>
        <begin position="66"/>
        <end position="70"/>
    </location>
</feature>
<feature type="helix" evidence="17">
    <location>
        <begin position="78"/>
        <end position="80"/>
    </location>
</feature>
<feature type="turn" evidence="17">
    <location>
        <begin position="81"/>
        <end position="85"/>
    </location>
</feature>
<feature type="helix" evidence="17">
    <location>
        <begin position="86"/>
        <end position="94"/>
    </location>
</feature>
<feature type="turn" evidence="17">
    <location>
        <begin position="95"/>
        <end position="97"/>
    </location>
</feature>
<feature type="strand" evidence="17">
    <location>
        <begin position="99"/>
        <end position="105"/>
    </location>
</feature>
<feature type="helix" evidence="17">
    <location>
        <begin position="116"/>
        <end position="130"/>
    </location>
</feature>
<feature type="strand" evidence="17">
    <location>
        <begin position="131"/>
        <end position="133"/>
    </location>
</feature>
<feature type="strand" evidence="17">
    <location>
        <begin position="146"/>
        <end position="151"/>
    </location>
</feature>
<feature type="helix" evidence="17">
    <location>
        <begin position="160"/>
        <end position="168"/>
    </location>
</feature>
<feature type="strand" evidence="17">
    <location>
        <begin position="173"/>
        <end position="175"/>
    </location>
</feature>
<feature type="strand" evidence="17">
    <location>
        <begin position="178"/>
        <end position="181"/>
    </location>
</feature>
<feature type="strand" evidence="17">
    <location>
        <begin position="184"/>
        <end position="188"/>
    </location>
</feature>
<feature type="turn" evidence="17">
    <location>
        <begin position="190"/>
        <end position="192"/>
    </location>
</feature>
<feature type="helix" evidence="17">
    <location>
        <begin position="193"/>
        <end position="196"/>
    </location>
</feature>
<feature type="strand" evidence="17">
    <location>
        <begin position="202"/>
        <end position="207"/>
    </location>
</feature>
<feature type="helix" evidence="17">
    <location>
        <begin position="224"/>
        <end position="236"/>
    </location>
</feature>
<feature type="strand" evidence="17">
    <location>
        <begin position="240"/>
        <end position="249"/>
    </location>
</feature>
<feature type="helix" evidence="17">
    <location>
        <begin position="250"/>
        <end position="252"/>
    </location>
</feature>
<feature type="strand" evidence="17">
    <location>
        <begin position="253"/>
        <end position="255"/>
    </location>
</feature>
<feature type="helix" evidence="17">
    <location>
        <begin position="260"/>
        <end position="266"/>
    </location>
</feature>
<feature type="helix" evidence="17">
    <location>
        <begin position="268"/>
        <end position="271"/>
    </location>
</feature>
<feature type="strand" evidence="17">
    <location>
        <begin position="277"/>
        <end position="283"/>
    </location>
</feature>
<feature type="helix" evidence="17">
    <location>
        <begin position="285"/>
        <end position="287"/>
    </location>
</feature>
<feature type="helix" evidence="17">
    <location>
        <begin position="291"/>
        <end position="295"/>
    </location>
</feature>
<feature type="helix" evidence="17">
    <location>
        <begin position="296"/>
        <end position="298"/>
    </location>
</feature>
<evidence type="ECO:0000255" key="1">
    <source>
        <dbReference type="PROSITE-ProRule" id="PRU01258"/>
    </source>
</evidence>
<evidence type="ECO:0000255" key="2">
    <source>
        <dbReference type="PROSITE-ProRule" id="PRU10053"/>
    </source>
</evidence>
<evidence type="ECO:0000269" key="3">
    <source>
    </source>
</evidence>
<evidence type="ECO:0000269" key="4">
    <source>
    </source>
</evidence>
<evidence type="ECO:0000269" key="5">
    <source>
    </source>
</evidence>
<evidence type="ECO:0000269" key="6">
    <source>
    </source>
</evidence>
<evidence type="ECO:0000303" key="7">
    <source>
    </source>
</evidence>
<evidence type="ECO:0000303" key="8">
    <source>
    </source>
</evidence>
<evidence type="ECO:0000303" key="9">
    <source>
    </source>
</evidence>
<evidence type="ECO:0000305" key="10"/>
<evidence type="ECO:0000305" key="11">
    <source>
    </source>
</evidence>
<evidence type="ECO:0000305" key="12">
    <source>
    </source>
</evidence>
<evidence type="ECO:0000305" key="13">
    <source>
    </source>
</evidence>
<evidence type="ECO:0000312" key="14">
    <source>
        <dbReference type="EMBL" id="BAK68869.1"/>
    </source>
</evidence>
<evidence type="ECO:0000312" key="15">
    <source>
        <dbReference type="EMBL" id="OWM64072.1"/>
    </source>
</evidence>
<evidence type="ECO:0007744" key="16">
    <source>
        <dbReference type="PDB" id="4TOQ"/>
    </source>
</evidence>
<evidence type="ECO:0007829" key="17">
    <source>
        <dbReference type="PDB" id="4TOQ"/>
    </source>
</evidence>
<organism evidence="14">
    <name type="scientific">Punica granatum</name>
    <name type="common">Pomegranate</name>
    <dbReference type="NCBI Taxonomy" id="22663"/>
    <lineage>
        <taxon>Eukaryota</taxon>
        <taxon>Viridiplantae</taxon>
        <taxon>Streptophyta</taxon>
        <taxon>Embryophyta</taxon>
        <taxon>Tracheophyta</taxon>
        <taxon>Spermatophyta</taxon>
        <taxon>Magnoliopsida</taxon>
        <taxon>eudicotyledons</taxon>
        <taxon>Gunneridae</taxon>
        <taxon>Pentapetalae</taxon>
        <taxon>rosids</taxon>
        <taxon>malvids</taxon>
        <taxon>Myrtales</taxon>
        <taxon>Lythraceae</taxon>
        <taxon>Punica</taxon>
    </lineage>
</organism>
<proteinExistence type="evidence at protein level"/>
<accession>G1UH28</accession>
<reference evidence="14" key="1">
    <citation type="journal article" date="2011" name="Plant J.">
        <title>Chitinase III in pomegranate seeds (Punica granatum Linn.): a high-capacity calcium-binding protein in amyloplasts.</title>
        <authorList>
            <person name="Yang H."/>
            <person name="Zhang T."/>
            <person name="Masuda T."/>
            <person name="Lv C."/>
            <person name="Sun L."/>
            <person name="Qu G."/>
            <person name="Zhao G."/>
        </authorList>
    </citation>
    <scope>NUCLEOTIDE SEQUENCE [MRNA]</scope>
    <scope>PROTEIN SEQUENCE OF 27-41; 67-91; 277-285 AND 286-296</scope>
    <scope>FUNCTION</scope>
    <scope>CATALYTIC ACTIVITY</scope>
    <scope>ACTIVITY REGULATION</scope>
    <scope>BIOPHYSICOCHEMICAL PROPERTIES</scope>
    <scope>SUBUNIT</scope>
    <scope>SUBCELLULAR LOCATION</scope>
    <scope>TISSUE SPECIFICITY</scope>
    <scope>DEVELOPMENTAL STAGE</scope>
    <scope>MASS SPECTROMETRY</scope>
    <scope>CIRCULAR DICHROISM ANALYSIS</scope>
    <source>
        <tissue evidence="7">Seed</tissue>
    </source>
</reference>
<reference evidence="15" key="2">
    <citation type="journal article" date="2017" name="Plant J.">
        <title>The pomegranate (Punica granatum L.) genome and the genomics of punicalagin biosynthesis.</title>
        <authorList>
            <person name="Qin G."/>
            <person name="Xu C."/>
            <person name="Ming R."/>
            <person name="Tang H."/>
            <person name="Guyot R."/>
            <person name="Kramer E.M."/>
            <person name="Hu Y."/>
            <person name="Yi X."/>
            <person name="Qi Y."/>
            <person name="Xu X."/>
            <person name="Gao Z."/>
            <person name="Pan H."/>
            <person name="Jian J."/>
            <person name="Tian Y."/>
            <person name="Yue Z."/>
            <person name="Xu Y."/>
        </authorList>
    </citation>
    <scope>NUCLEOTIDE SEQUENCE [LARGE SCALE GENOMIC DNA]</scope>
    <source>
        <strain>cv. Dabenzi</strain>
        <tissue evidence="15">Leaf</tissue>
    </source>
</reference>
<reference key="3">
    <citation type="journal article" date="2018" name="Mol. Immunol.">
        <title>Pomegranate chitinase III: Identification of a new allergen and analysis of sensitization patterns to chitinases.</title>
        <authorList>
            <person name="Tuppo L."/>
            <person name="Giangrieco I."/>
            <person name="Alessandri C."/>
            <person name="Ricciardi T."/>
            <person name="Rafaiani C."/>
            <person name="Ciancamerla M."/>
            <person name="Ferrara R."/>
            <person name="Zennaro D."/>
            <person name="Bernardi M.L."/>
            <person name="Tamburrini M."/>
            <person name="Mari A."/>
            <person name="Ciardiello M.A."/>
        </authorList>
    </citation>
    <scope>PROTEIN SEQUENCE OF 27-37</scope>
    <scope>MASS SPECTROMETRY</scope>
    <scope>ALLERGEN</scope>
</reference>
<reference key="4">
    <citation type="journal article" date="2011" name="Plant Signal. Behav.">
        <title>High-capacity calcium-binding chitinase III from pomegranate seeds (Punica granatum Linn.) is located in amyloplasts.</title>
        <authorList>
            <person name="Lv C."/>
            <person name="Masuda T."/>
            <person name="Yang H."/>
            <person name="Sun L."/>
            <person name="Zhao G."/>
        </authorList>
    </citation>
    <scope>3D-STRUCTURE MODELING</scope>
    <scope>SUBCELLULAR LOCATION</scope>
</reference>
<reference evidence="16" key="5">
    <citation type="journal article" date="2015" name="Biosci. Biotechnol. Biochem.">
        <title>Crystal structure of class III chitinase from pomegranate provides the insight into its metal storage capacity.</title>
        <authorList>
            <person name="Masuda T."/>
            <person name="Zhao G."/>
            <person name="Mikami B."/>
        </authorList>
    </citation>
    <scope>X-RAY CRYSTALLOGRAPHY (1.60 ANGSTROMS) OF 27-299</scope>
    <scope>DISULFIDE BONDS</scope>
</reference>
<comment type="function">
    <text evidence="3">Hydrolyzes chitin. Probable calcium storage protein of the seeds. Binds calcium ions with high capacity and low affinity. Involved in seed germination.</text>
</comment>
<comment type="catalytic activity">
    <reaction evidence="2 3">
        <text>Random endo-hydrolysis of N-acetyl-beta-D-glucosaminide (1-&gt;4)-beta-linkages in chitin and chitodextrins.</text>
        <dbReference type="EC" id="3.2.1.14"/>
    </reaction>
</comment>
<comment type="activity regulation">
    <text evidence="3">Activity is not affected by addition of 10 mM Ca(2+) or removal of Ca(2+).</text>
</comment>
<comment type="biophysicochemical properties">
    <kinetics>
        <text evidence="3">kcat/KM is 0.119 M(-1)sec(-1) for native protein, 0.130 M(-1)sec(-1) for native protein with 10 mM Ca(2+) and 0.116 M(-1)sec(-1) for EDTA-treated protein, using 4-methylumbelliferyl-beta-D-N,N',N''-triacetylchitotrioside (4-MU(GlcNAc)(3)) as substrate at pH 4.5 and 37 degrees Celsius.</text>
    </kinetics>
    <phDependence>
        <text evidence="3">Optimum pH is between 2.5 and 5.0. Removal of Ca(2+) from the protein by EDTA treatment narrows the pH range to 2.5-3.5.</text>
    </phDependence>
    <temperatureDependence>
        <text evidence="3">Optimum temperature is approximately 45 degrees Celsius. Removal of Ca(2+) from the protein by EDTA treatment decreases the optimum temperature to 35 degrees Celsius.</text>
    </temperatureDependence>
</comment>
<comment type="subunit">
    <text evidence="3">Monomer.</text>
</comment>
<comment type="subcellular location">
    <subcellularLocation>
        <location evidence="3 4">Plastid</location>
        <location evidence="3 4">Amyloplast</location>
    </subcellularLocation>
    <text evidence="3 4">Localizes to stroma in amyloplasts of the embryonic cells of the seed.</text>
</comment>
<comment type="tissue specificity">
    <text evidence="3">Highly expressed in seeds and to a lesser extent in the skin of the pomegranate fruit (at protein level). Not expressed in leaves or flesh of the fruit (at protein level).</text>
</comment>
<comment type="developmental stage">
    <text evidence="3">Expressed at all stages of seed germination. Expression decreases markedly from day 1 to day 15 after imbibition.</text>
</comment>
<comment type="mass spectrometry">
    <text>The measured mass is that of EDTA-treated protein to remove Ca(2+).</text>
</comment>
<comment type="mass spectrometry">
    <text>The measured mass is that of protein without EDTA-treatment to retain Ca(2+).</text>
</comment>
<comment type="mass spectrometry">
    <text>The measured mass is that of protein with three disulfide bridges.</text>
</comment>
<comment type="allergen">
    <text evidence="6">Causes an allergic reaction in human. Binds to IgE in 19% of 357 patients allergic to pomegranate.</text>
</comment>
<comment type="similarity">
    <text evidence="10">Belongs to the glycosyl hydrolase 18 family. Chitinase class III subfamily.</text>
</comment>
<dbReference type="EC" id="3.2.1.14" evidence="2 3 14"/>
<dbReference type="EMBL" id="AB605773">
    <property type="protein sequence ID" value="BAK68869.1"/>
    <property type="molecule type" value="mRNA"/>
</dbReference>
<dbReference type="EMBL" id="MTKT01005817">
    <property type="protein sequence ID" value="OWM64072.1"/>
    <property type="molecule type" value="Genomic_DNA"/>
</dbReference>
<dbReference type="PDB" id="4TOQ">
    <property type="method" value="X-ray"/>
    <property type="resolution" value="1.60 A"/>
    <property type="chains" value="A/B/C/D=27-299"/>
</dbReference>
<dbReference type="PDBsum" id="4TOQ"/>
<dbReference type="SMR" id="G1UH28"/>
<dbReference type="Allergome" id="11786">
    <property type="allergen name" value="Pun g 14"/>
</dbReference>
<dbReference type="Allergome" id="12339">
    <property type="allergen name" value="Pun g 14.0101"/>
</dbReference>
<dbReference type="EvolutionaryTrace" id="G1UH28"/>
<dbReference type="Proteomes" id="UP000197138">
    <property type="component" value="Unassembled WGS sequence"/>
</dbReference>
<dbReference type="Proteomes" id="UP000515151">
    <property type="component" value="Unplaced"/>
</dbReference>
<dbReference type="GO" id="GO:0009501">
    <property type="term" value="C:amyloplast"/>
    <property type="evidence" value="ECO:0000314"/>
    <property type="project" value="UniProtKB"/>
</dbReference>
<dbReference type="GO" id="GO:0005576">
    <property type="term" value="C:extracellular region"/>
    <property type="evidence" value="ECO:0007669"/>
    <property type="project" value="TreeGrafter"/>
</dbReference>
<dbReference type="GO" id="GO:0005509">
    <property type="term" value="F:calcium ion binding"/>
    <property type="evidence" value="ECO:0000314"/>
    <property type="project" value="UniProtKB"/>
</dbReference>
<dbReference type="GO" id="GO:0004568">
    <property type="term" value="F:chitinase activity"/>
    <property type="evidence" value="ECO:0000314"/>
    <property type="project" value="UniProtKB"/>
</dbReference>
<dbReference type="GO" id="GO:0008843">
    <property type="term" value="F:endochitinase activity"/>
    <property type="evidence" value="ECO:0007669"/>
    <property type="project" value="UniProtKB-EC"/>
</dbReference>
<dbReference type="GO" id="GO:0006032">
    <property type="term" value="P:chitin catabolic process"/>
    <property type="evidence" value="ECO:0000314"/>
    <property type="project" value="UniProtKB"/>
</dbReference>
<dbReference type="GO" id="GO:0000272">
    <property type="term" value="P:polysaccharide catabolic process"/>
    <property type="evidence" value="ECO:0007669"/>
    <property type="project" value="UniProtKB-KW"/>
</dbReference>
<dbReference type="GO" id="GO:0009845">
    <property type="term" value="P:seed germination"/>
    <property type="evidence" value="ECO:0000270"/>
    <property type="project" value="UniProtKB"/>
</dbReference>
<dbReference type="GO" id="GO:0090351">
    <property type="term" value="P:seedling development"/>
    <property type="evidence" value="ECO:0000270"/>
    <property type="project" value="UniProtKB"/>
</dbReference>
<dbReference type="CDD" id="cd02877">
    <property type="entry name" value="GH18_hevamine_XipI_class_III"/>
    <property type="match status" value="1"/>
</dbReference>
<dbReference type="FunFam" id="3.20.20.80:FF:000015">
    <property type="entry name" value="Acidic endochitinase SE2"/>
    <property type="match status" value="1"/>
</dbReference>
<dbReference type="Gene3D" id="3.20.20.80">
    <property type="entry name" value="Glycosidases"/>
    <property type="match status" value="1"/>
</dbReference>
<dbReference type="InterPro" id="IPR045321">
    <property type="entry name" value="Cts1-like"/>
</dbReference>
<dbReference type="InterPro" id="IPR001223">
    <property type="entry name" value="Glyco_hydro18_cat"/>
</dbReference>
<dbReference type="InterPro" id="IPR001579">
    <property type="entry name" value="Glyco_hydro_18_chit_AS"/>
</dbReference>
<dbReference type="InterPro" id="IPR017853">
    <property type="entry name" value="Glycoside_hydrolase_SF"/>
</dbReference>
<dbReference type="InterPro" id="IPR050542">
    <property type="entry name" value="Glycosyl_Hydrlase18_Chitinase"/>
</dbReference>
<dbReference type="PANTHER" id="PTHR45708:SF21">
    <property type="entry name" value="ACIDIC ENDOCHITINASE"/>
    <property type="match status" value="1"/>
</dbReference>
<dbReference type="PANTHER" id="PTHR45708">
    <property type="entry name" value="ENDOCHITINASE"/>
    <property type="match status" value="1"/>
</dbReference>
<dbReference type="Pfam" id="PF00704">
    <property type="entry name" value="Glyco_hydro_18"/>
    <property type="match status" value="1"/>
</dbReference>
<dbReference type="SUPFAM" id="SSF51445">
    <property type="entry name" value="(Trans)glycosidases"/>
    <property type="match status" value="1"/>
</dbReference>
<dbReference type="PROSITE" id="PS01095">
    <property type="entry name" value="GH18_1"/>
    <property type="match status" value="1"/>
</dbReference>
<dbReference type="PROSITE" id="PS51910">
    <property type="entry name" value="GH18_2"/>
    <property type="match status" value="1"/>
</dbReference>
<gene>
    <name evidence="7 14" type="primary">PSC</name>
    <name evidence="15" type="ORF">CDL15_Pgr011527</name>
</gene>